<proteinExistence type="evidence at protein level"/>
<accession>Q2TAM9</accession>
<accession>A0PJ78</accession>
<accession>Q67GI3</accession>
<accession>Q86SS1</accession>
<accession>Q8TAH8</accession>
<name>TUSC1_HUMAN</name>
<sequence>MWRMRGGATRRGSCCGGDGAADGRGPGRSGRARGGGSPSGGGGGVGWRGRADGARQQLEERFADLAASHLEAIRARDEWDRQNARLRQENARLRLENRRLKRENRSLFRQALRLPGEGGNGTPAEARRVPEEASTNRRARDSGREDEPGSPRALRARLEKLEAMYRRALLQLHLEQRGPRPSGDKEEQPLQEPDSGLRSRDSEPSGPWL</sequence>
<comment type="tissue specificity">
    <text evidence="3">Widely expressed at low level. Expressed at higher level in testis, weakly expressed in muscle, colon, lung and spleen. Not detected in 3 non small cell lung carcinoma (NSCLC) cell lines with homozygous deletion of the 9p region, while it is down-regulated in 3 other tumor cell lines.</text>
</comment>
<comment type="sequence caution" evidence="5">
    <conflict type="erroneous initiation">
        <sequence resource="EMBL-CDS" id="AAI10825"/>
    </conflict>
    <text>Extended N-terminus.</text>
</comment>
<feature type="chain" id="PRO_0000312284" description="Tumor suppressor candidate gene 1 protein">
    <location>
        <begin position="1"/>
        <end position="209"/>
    </location>
</feature>
<feature type="region of interest" description="Disordered" evidence="2">
    <location>
        <begin position="1"/>
        <end position="55"/>
    </location>
</feature>
<feature type="region of interest" description="Disordered" evidence="2">
    <location>
        <begin position="111"/>
        <end position="157"/>
    </location>
</feature>
<feature type="region of interest" description="Disordered" evidence="2">
    <location>
        <begin position="172"/>
        <end position="209"/>
    </location>
</feature>
<feature type="coiled-coil region" evidence="1">
    <location>
        <begin position="70"/>
        <end position="114"/>
    </location>
</feature>
<feature type="coiled-coil region" evidence="1">
    <location>
        <begin position="152"/>
        <end position="177"/>
    </location>
</feature>
<feature type="compositionally biased region" description="Gly residues" evidence="2">
    <location>
        <begin position="14"/>
        <end position="47"/>
    </location>
</feature>
<feature type="compositionally biased region" description="Basic and acidic residues" evidence="2">
    <location>
        <begin position="125"/>
        <end position="149"/>
    </location>
</feature>
<feature type="compositionally biased region" description="Basic and acidic residues" evidence="2">
    <location>
        <begin position="174"/>
        <end position="188"/>
    </location>
</feature>
<feature type="modified residue" description="Phosphoserine" evidence="6">
    <location>
        <position position="150"/>
    </location>
</feature>
<feature type="sequence variant" id="VAR_037471" description="In dbSNP:rs34498078." evidence="4 7">
    <original>N</original>
    <variation>D</variation>
    <location>
        <position position="120"/>
    </location>
</feature>
<organism>
    <name type="scientific">Homo sapiens</name>
    <name type="common">Human</name>
    <dbReference type="NCBI Taxonomy" id="9606"/>
    <lineage>
        <taxon>Eukaryota</taxon>
        <taxon>Metazoa</taxon>
        <taxon>Chordata</taxon>
        <taxon>Craniata</taxon>
        <taxon>Vertebrata</taxon>
        <taxon>Euteleostomi</taxon>
        <taxon>Mammalia</taxon>
        <taxon>Eutheria</taxon>
        <taxon>Euarchontoglires</taxon>
        <taxon>Primates</taxon>
        <taxon>Haplorrhini</taxon>
        <taxon>Catarrhini</taxon>
        <taxon>Hominidae</taxon>
        <taxon>Homo</taxon>
    </lineage>
</organism>
<evidence type="ECO:0000255" key="1"/>
<evidence type="ECO:0000256" key="2">
    <source>
        <dbReference type="SAM" id="MobiDB-lite"/>
    </source>
</evidence>
<evidence type="ECO:0000269" key="3">
    <source>
    </source>
</evidence>
<evidence type="ECO:0000269" key="4">
    <source>
    </source>
</evidence>
<evidence type="ECO:0000305" key="5"/>
<evidence type="ECO:0007744" key="6">
    <source>
    </source>
</evidence>
<evidence type="ECO:0007744" key="7">
    <source>
    </source>
</evidence>
<dbReference type="EMBL" id="AY168647">
    <property type="protein sequence ID" value="AAO38227.2"/>
    <property type="molecule type" value="mRNA"/>
</dbReference>
<dbReference type="EMBL" id="AL590322">
    <property type="status" value="NOT_ANNOTATED_CDS"/>
    <property type="molecule type" value="Genomic_DNA"/>
</dbReference>
<dbReference type="EMBL" id="BC017510">
    <property type="protein sequence ID" value="AAH17510.1"/>
    <property type="molecule type" value="mRNA"/>
</dbReference>
<dbReference type="EMBL" id="BC028316">
    <property type="protein sequence ID" value="AAH28316.1"/>
    <property type="molecule type" value="mRNA"/>
</dbReference>
<dbReference type="EMBL" id="BC046919">
    <property type="protein sequence ID" value="AAH46919.1"/>
    <property type="molecule type" value="mRNA"/>
</dbReference>
<dbReference type="EMBL" id="BC110824">
    <property type="protein sequence ID" value="AAI10825.1"/>
    <property type="status" value="ALT_INIT"/>
    <property type="molecule type" value="mRNA"/>
</dbReference>
<dbReference type="CCDS" id="CCDS34999.2"/>
<dbReference type="RefSeq" id="NP_001004125.2">
    <property type="nucleotide sequence ID" value="NM_001004125.3"/>
</dbReference>
<dbReference type="SMR" id="Q2TAM9"/>
<dbReference type="BioGRID" id="130351">
    <property type="interactions" value="8"/>
</dbReference>
<dbReference type="FunCoup" id="Q2TAM9">
    <property type="interactions" value="20"/>
</dbReference>
<dbReference type="IntAct" id="Q2TAM9">
    <property type="interactions" value="5"/>
</dbReference>
<dbReference type="MINT" id="Q2TAM9"/>
<dbReference type="STRING" id="9606.ENSP00000350716"/>
<dbReference type="iPTMnet" id="Q2TAM9"/>
<dbReference type="PhosphoSitePlus" id="Q2TAM9"/>
<dbReference type="BioMuta" id="TUSC1"/>
<dbReference type="DMDM" id="259016374"/>
<dbReference type="jPOST" id="Q2TAM9"/>
<dbReference type="MassIVE" id="Q2TAM9"/>
<dbReference type="PaxDb" id="9606-ENSP00000350716"/>
<dbReference type="PeptideAtlas" id="Q2TAM9"/>
<dbReference type="ProteomicsDB" id="61470"/>
<dbReference type="Pumba" id="Q2TAM9"/>
<dbReference type="Antibodypedia" id="24938">
    <property type="antibodies" value="118 antibodies from 22 providers"/>
</dbReference>
<dbReference type="DNASU" id="286319"/>
<dbReference type="Ensembl" id="ENST00000358022.6">
    <property type="protein sequence ID" value="ENSP00000350716.4"/>
    <property type="gene ID" value="ENSG00000198680.6"/>
</dbReference>
<dbReference type="GeneID" id="286319"/>
<dbReference type="KEGG" id="hsa:286319"/>
<dbReference type="MANE-Select" id="ENST00000358022.6">
    <property type="protein sequence ID" value="ENSP00000350716.4"/>
    <property type="RefSeq nucleotide sequence ID" value="NM_001004125.3"/>
    <property type="RefSeq protein sequence ID" value="NP_001004125.2"/>
</dbReference>
<dbReference type="UCSC" id="uc003zpx.4">
    <property type="organism name" value="human"/>
</dbReference>
<dbReference type="AGR" id="HGNC:31010"/>
<dbReference type="CTD" id="286319"/>
<dbReference type="DisGeNET" id="286319"/>
<dbReference type="GeneCards" id="TUSC1"/>
<dbReference type="HGNC" id="HGNC:31010">
    <property type="gene designation" value="TUSC1"/>
</dbReference>
<dbReference type="HPA" id="ENSG00000198680">
    <property type="expression patterns" value="Low tissue specificity"/>
</dbReference>
<dbReference type="MIM" id="610529">
    <property type="type" value="gene"/>
</dbReference>
<dbReference type="neXtProt" id="NX_Q2TAM9"/>
<dbReference type="OpenTargets" id="ENSG00000198680"/>
<dbReference type="PharmGKB" id="PA134889281"/>
<dbReference type="VEuPathDB" id="HostDB:ENSG00000198680"/>
<dbReference type="eggNOG" id="ENOG502SVWC">
    <property type="taxonomic scope" value="Eukaryota"/>
</dbReference>
<dbReference type="GeneTree" id="ENSGT00390000013920"/>
<dbReference type="HOGENOM" id="CLU_113559_0_0_1"/>
<dbReference type="InParanoid" id="Q2TAM9"/>
<dbReference type="OrthoDB" id="9838253at2759"/>
<dbReference type="PAN-GO" id="Q2TAM9">
    <property type="GO annotations" value="0 GO annotations based on evolutionary models"/>
</dbReference>
<dbReference type="PhylomeDB" id="Q2TAM9"/>
<dbReference type="TreeFam" id="TF336220"/>
<dbReference type="PathwayCommons" id="Q2TAM9"/>
<dbReference type="SignaLink" id="Q2TAM9"/>
<dbReference type="BioGRID-ORCS" id="286319">
    <property type="hits" value="5 hits in 1132 CRISPR screens"/>
</dbReference>
<dbReference type="GenomeRNAi" id="286319"/>
<dbReference type="Pharos" id="Q2TAM9">
    <property type="development level" value="Tbio"/>
</dbReference>
<dbReference type="PRO" id="PR:Q2TAM9"/>
<dbReference type="Proteomes" id="UP000005640">
    <property type="component" value="Chromosome 9"/>
</dbReference>
<dbReference type="RNAct" id="Q2TAM9">
    <property type="molecule type" value="protein"/>
</dbReference>
<dbReference type="Bgee" id="ENSG00000198680">
    <property type="expression patterns" value="Expressed in epithelial cell of pancreas and 195 other cell types or tissues"/>
</dbReference>
<dbReference type="InterPro" id="IPR043450">
    <property type="entry name" value="CCDC89-like"/>
</dbReference>
<dbReference type="PANTHER" id="PTHR34768">
    <property type="entry name" value="COILED-COIL DOMAIN-CONTAINING PROTEIN 89"/>
    <property type="match status" value="1"/>
</dbReference>
<dbReference type="PANTHER" id="PTHR34768:SF3">
    <property type="entry name" value="TUMOR SUPPRESSOR CANDIDATE GENE 1 PROTEIN"/>
    <property type="match status" value="1"/>
</dbReference>
<gene>
    <name type="primary">TUSC1</name>
</gene>
<keyword id="KW-0175">Coiled coil</keyword>
<keyword id="KW-0597">Phosphoprotein</keyword>
<keyword id="KW-1267">Proteomics identification</keyword>
<keyword id="KW-1185">Reference proteome</keyword>
<reference key="1">
    <citation type="journal article" date="2004" name="Oncogene">
        <title>Identifying novel homozygous deletions by microsatellite analysis and characterization of tumor suppressor candidate 1 gene, TUSC1, on chromosome 9p in human lung cancer.</title>
        <authorList>
            <person name="Shan Z."/>
            <person name="Parker T."/>
            <person name="Wiest J.S."/>
        </authorList>
    </citation>
    <scope>NUCLEOTIDE SEQUENCE [MRNA]</scope>
    <scope>TISSUE SPECIFICITY</scope>
</reference>
<reference key="2">
    <citation type="journal article" date="2004" name="Nature">
        <title>DNA sequence and analysis of human chromosome 9.</title>
        <authorList>
            <person name="Humphray S.J."/>
            <person name="Oliver K."/>
            <person name="Hunt A.R."/>
            <person name="Plumb R.W."/>
            <person name="Loveland J.E."/>
            <person name="Howe K.L."/>
            <person name="Andrews T.D."/>
            <person name="Searle S."/>
            <person name="Hunt S.E."/>
            <person name="Scott C.E."/>
            <person name="Jones M.C."/>
            <person name="Ainscough R."/>
            <person name="Almeida J.P."/>
            <person name="Ambrose K.D."/>
            <person name="Ashwell R.I.S."/>
            <person name="Babbage A.K."/>
            <person name="Babbage S."/>
            <person name="Bagguley C.L."/>
            <person name="Bailey J."/>
            <person name="Banerjee R."/>
            <person name="Barker D.J."/>
            <person name="Barlow K.F."/>
            <person name="Bates K."/>
            <person name="Beasley H."/>
            <person name="Beasley O."/>
            <person name="Bird C.P."/>
            <person name="Bray-Allen S."/>
            <person name="Brown A.J."/>
            <person name="Brown J.Y."/>
            <person name="Burford D."/>
            <person name="Burrill W."/>
            <person name="Burton J."/>
            <person name="Carder C."/>
            <person name="Carter N.P."/>
            <person name="Chapman J.C."/>
            <person name="Chen Y."/>
            <person name="Clarke G."/>
            <person name="Clark S.Y."/>
            <person name="Clee C.M."/>
            <person name="Clegg S."/>
            <person name="Collier R.E."/>
            <person name="Corby N."/>
            <person name="Crosier M."/>
            <person name="Cummings A.T."/>
            <person name="Davies J."/>
            <person name="Dhami P."/>
            <person name="Dunn M."/>
            <person name="Dutta I."/>
            <person name="Dyer L.W."/>
            <person name="Earthrowl M.E."/>
            <person name="Faulkner L."/>
            <person name="Fleming C.J."/>
            <person name="Frankish A."/>
            <person name="Frankland J.A."/>
            <person name="French L."/>
            <person name="Fricker D.G."/>
            <person name="Garner P."/>
            <person name="Garnett J."/>
            <person name="Ghori J."/>
            <person name="Gilbert J.G.R."/>
            <person name="Glison C."/>
            <person name="Grafham D.V."/>
            <person name="Gribble S."/>
            <person name="Griffiths C."/>
            <person name="Griffiths-Jones S."/>
            <person name="Grocock R."/>
            <person name="Guy J."/>
            <person name="Hall R.E."/>
            <person name="Hammond S."/>
            <person name="Harley J.L."/>
            <person name="Harrison E.S.I."/>
            <person name="Hart E.A."/>
            <person name="Heath P.D."/>
            <person name="Henderson C.D."/>
            <person name="Hopkins B.L."/>
            <person name="Howard P.J."/>
            <person name="Howden P.J."/>
            <person name="Huckle E."/>
            <person name="Johnson C."/>
            <person name="Johnson D."/>
            <person name="Joy A.A."/>
            <person name="Kay M."/>
            <person name="Keenan S."/>
            <person name="Kershaw J.K."/>
            <person name="Kimberley A.M."/>
            <person name="King A."/>
            <person name="Knights A."/>
            <person name="Laird G.K."/>
            <person name="Langford C."/>
            <person name="Lawlor S."/>
            <person name="Leongamornlert D.A."/>
            <person name="Leversha M."/>
            <person name="Lloyd C."/>
            <person name="Lloyd D.M."/>
            <person name="Lovell J."/>
            <person name="Martin S."/>
            <person name="Mashreghi-Mohammadi M."/>
            <person name="Matthews L."/>
            <person name="McLaren S."/>
            <person name="McLay K.E."/>
            <person name="McMurray A."/>
            <person name="Milne S."/>
            <person name="Nickerson T."/>
            <person name="Nisbett J."/>
            <person name="Nordsiek G."/>
            <person name="Pearce A.V."/>
            <person name="Peck A.I."/>
            <person name="Porter K.M."/>
            <person name="Pandian R."/>
            <person name="Pelan S."/>
            <person name="Phillimore B."/>
            <person name="Povey S."/>
            <person name="Ramsey Y."/>
            <person name="Rand V."/>
            <person name="Scharfe M."/>
            <person name="Sehra H.K."/>
            <person name="Shownkeen R."/>
            <person name="Sims S.K."/>
            <person name="Skuce C.D."/>
            <person name="Smith M."/>
            <person name="Steward C.A."/>
            <person name="Swarbreck D."/>
            <person name="Sycamore N."/>
            <person name="Tester J."/>
            <person name="Thorpe A."/>
            <person name="Tracey A."/>
            <person name="Tromans A."/>
            <person name="Thomas D.W."/>
            <person name="Wall M."/>
            <person name="Wallis J.M."/>
            <person name="West A.P."/>
            <person name="Whitehead S.L."/>
            <person name="Willey D.L."/>
            <person name="Williams S.A."/>
            <person name="Wilming L."/>
            <person name="Wray P.W."/>
            <person name="Young L."/>
            <person name="Ashurst J.L."/>
            <person name="Coulson A."/>
            <person name="Blocker H."/>
            <person name="Durbin R.M."/>
            <person name="Sulston J.E."/>
            <person name="Hubbard T."/>
            <person name="Jackson M.J."/>
            <person name="Bentley D.R."/>
            <person name="Beck S."/>
            <person name="Rogers J."/>
            <person name="Dunham I."/>
        </authorList>
    </citation>
    <scope>NUCLEOTIDE SEQUENCE [LARGE SCALE GENOMIC DNA]</scope>
</reference>
<reference key="3">
    <citation type="journal article" date="2004" name="Genome Res.">
        <title>The status, quality, and expansion of the NIH full-length cDNA project: the Mammalian Gene Collection (MGC).</title>
        <authorList>
            <consortium name="The MGC Project Team"/>
        </authorList>
    </citation>
    <scope>NUCLEOTIDE SEQUENCE [LARGE SCALE MRNA]</scope>
    <scope>VARIANT ASP-120</scope>
    <source>
        <tissue>Brain</tissue>
        <tissue>Colon</tissue>
        <tissue>Skin</tissue>
    </source>
</reference>
<reference key="4">
    <citation type="journal article" date="2006" name="Cell">
        <title>Global, in vivo, and site-specific phosphorylation dynamics in signaling networks.</title>
        <authorList>
            <person name="Olsen J.V."/>
            <person name="Blagoev B."/>
            <person name="Gnad F."/>
            <person name="Macek B."/>
            <person name="Kumar C."/>
            <person name="Mortensen P."/>
            <person name="Mann M."/>
        </authorList>
    </citation>
    <scope>PHOSPHORYLATION [LARGE SCALE ANALYSIS] AT SER-150</scope>
    <scope>IDENTIFICATION BY MASS SPECTROMETRY [LARGE SCALE ANALYSIS]</scope>
    <source>
        <tissue>Cervix carcinoma</tissue>
    </source>
</reference>
<reference key="5">
    <citation type="journal article" date="2011" name="BMC Syst. Biol.">
        <title>Initial characterization of the human central proteome.</title>
        <authorList>
            <person name="Burkard T.R."/>
            <person name="Planyavsky M."/>
            <person name="Kaupe I."/>
            <person name="Breitwieser F.P."/>
            <person name="Buerckstuemmer T."/>
            <person name="Bennett K.L."/>
            <person name="Superti-Furga G."/>
            <person name="Colinge J."/>
        </authorList>
    </citation>
    <scope>VARIANT [LARGE SCALE ANALYSIS] ASP-120</scope>
    <scope>IDENTIFICATION BY MASS SPECTROMETRY [LARGE SCALE ANALYSIS]</scope>
</reference>
<protein>
    <recommendedName>
        <fullName>Tumor suppressor candidate gene 1 protein</fullName>
    </recommendedName>
    <alternativeName>
        <fullName>TSG-9</fullName>
        <shortName>TSG9</shortName>
    </alternativeName>
</protein>